<name>MATK_PINPU</name>
<dbReference type="EMBL" id="AB161013">
    <property type="protein sequence ID" value="BAD32756.1"/>
    <property type="molecule type" value="Genomic_DNA"/>
</dbReference>
<dbReference type="GO" id="GO:0009507">
    <property type="term" value="C:chloroplast"/>
    <property type="evidence" value="ECO:0007669"/>
    <property type="project" value="UniProtKB-SubCell"/>
</dbReference>
<dbReference type="GO" id="GO:0003723">
    <property type="term" value="F:RNA binding"/>
    <property type="evidence" value="ECO:0007669"/>
    <property type="project" value="UniProtKB-KW"/>
</dbReference>
<dbReference type="GO" id="GO:0006397">
    <property type="term" value="P:mRNA processing"/>
    <property type="evidence" value="ECO:0007669"/>
    <property type="project" value="UniProtKB-KW"/>
</dbReference>
<dbReference type="GO" id="GO:0008380">
    <property type="term" value="P:RNA splicing"/>
    <property type="evidence" value="ECO:0007669"/>
    <property type="project" value="UniProtKB-UniRule"/>
</dbReference>
<dbReference type="GO" id="GO:0008033">
    <property type="term" value="P:tRNA processing"/>
    <property type="evidence" value="ECO:0007669"/>
    <property type="project" value="UniProtKB-KW"/>
</dbReference>
<dbReference type="HAMAP" id="MF_01390">
    <property type="entry name" value="MatK"/>
    <property type="match status" value="1"/>
</dbReference>
<dbReference type="InterPro" id="IPR024937">
    <property type="entry name" value="Domain_X"/>
</dbReference>
<dbReference type="InterPro" id="IPR002866">
    <property type="entry name" value="Maturase_MatK"/>
</dbReference>
<dbReference type="InterPro" id="IPR024942">
    <property type="entry name" value="Maturase_MatK_N"/>
</dbReference>
<dbReference type="PANTHER" id="PTHR34811">
    <property type="entry name" value="MATURASE K"/>
    <property type="match status" value="1"/>
</dbReference>
<dbReference type="PANTHER" id="PTHR34811:SF1">
    <property type="entry name" value="MATURASE K"/>
    <property type="match status" value="1"/>
</dbReference>
<dbReference type="Pfam" id="PF01348">
    <property type="entry name" value="Intron_maturas2"/>
    <property type="match status" value="1"/>
</dbReference>
<dbReference type="Pfam" id="PF01824">
    <property type="entry name" value="MatK_N"/>
    <property type="match status" value="1"/>
</dbReference>
<protein>
    <recommendedName>
        <fullName evidence="1">Maturase K</fullName>
    </recommendedName>
    <alternativeName>
        <fullName evidence="1">Intron maturase</fullName>
    </alternativeName>
</protein>
<sequence length="515" mass="60956">MDEFHRYGKEDNSRQQCFLYPLFFQEDLYAISHDHYLDGSSSSEPMEHLSSNDQFSFLTVKRLIGQIRQQNHSIVLFVNCAPNPLADCKKSSYSESVLEGLTLVLEVPFSIRSKYSVEGMNEWKSFRSIHSIFPFLEDKFPHSNYISDARIPYSIHPEILVRTFRRLIRDAPSLHPLRSVLYEYRNSPENLQRSIIVVPRVNTRFFLFLWNYYVYECESILFSLLKRSSHSRSVAHRPFPQRTHFHRKIKHIIIFSRRNSLKSIWLLKDPKINYVRYGERSIIAIKGTHLLVKKCRYYLLLFRQCYFHLWSEPYRVCSHQLSKNCSSSPGYFLRVRMNPLFVRTKMLDELFIADLITNEFDPIVPIVPILGLLAREKFCDVSGRPISKLSWTNLTDDDILNRFDQIWRNLFHYYSGSFGRDGLYRIKYILSLSCAKTLACKHKSTIRVVRKELGPELFQKSFSKEREFDSLPFSSKAAARSQRERIWHSDIPQINPLVNSWQKIQDLKIENLFDQ</sequence>
<accession>Q6BDH3</accession>
<gene>
    <name evidence="1" type="primary">matK</name>
</gene>
<proteinExistence type="inferred from homology"/>
<reference key="1">
    <citation type="submission" date="2004-01" db="EMBL/GenBank/DDBJ databases">
        <title>Phylogeny and classification of Pinus.</title>
        <authorList>
            <person name="Gernandt D."/>
            <person name="Geada-Lopez G."/>
            <person name="Liston A."/>
        </authorList>
    </citation>
    <scope>NUCLEOTIDE SEQUENCE [GENOMIC DNA]</scope>
    <source>
        <tissue>Leaf</tissue>
    </source>
</reference>
<comment type="function">
    <text evidence="1">Usually encoded in the trnK tRNA gene intron. Probably assists in splicing its own and other chloroplast group II introns.</text>
</comment>
<comment type="subcellular location">
    <subcellularLocation>
        <location>Plastid</location>
        <location>Chloroplast</location>
    </subcellularLocation>
</comment>
<comment type="similarity">
    <text evidence="1">Belongs to the intron maturase 2 family. MatK subfamily.</text>
</comment>
<keyword id="KW-0150">Chloroplast</keyword>
<keyword id="KW-0507">mRNA processing</keyword>
<keyword id="KW-0934">Plastid</keyword>
<keyword id="KW-0694">RNA-binding</keyword>
<keyword id="KW-0819">tRNA processing</keyword>
<evidence type="ECO:0000255" key="1">
    <source>
        <dbReference type="HAMAP-Rule" id="MF_01390"/>
    </source>
</evidence>
<geneLocation type="chloroplast"/>
<feature type="chain" id="PRO_0000143625" description="Maturase K">
    <location>
        <begin position="1"/>
        <end position="515"/>
    </location>
</feature>
<organism>
    <name type="scientific">Pinus pumila</name>
    <name type="common">Dwarf Siberian pine</name>
    <name type="synonym">Pinus cembra var. pumila</name>
    <dbReference type="NCBI Taxonomy" id="71649"/>
    <lineage>
        <taxon>Eukaryota</taxon>
        <taxon>Viridiplantae</taxon>
        <taxon>Streptophyta</taxon>
        <taxon>Embryophyta</taxon>
        <taxon>Tracheophyta</taxon>
        <taxon>Spermatophyta</taxon>
        <taxon>Pinopsida</taxon>
        <taxon>Pinidae</taxon>
        <taxon>Conifers I</taxon>
        <taxon>Pinales</taxon>
        <taxon>Pinaceae</taxon>
        <taxon>Pinus</taxon>
        <taxon>Pinus subgen. Strobus</taxon>
    </lineage>
</organism>